<accession>Q9VCC0</accession>
<accession>Q9U4A3</accession>
<dbReference type="EMBL" id="AF192465">
    <property type="protein sequence ID" value="AAF18436.1"/>
    <property type="molecule type" value="mRNA"/>
</dbReference>
<dbReference type="EMBL" id="AE014297">
    <property type="protein sequence ID" value="AAF56252.1"/>
    <property type="molecule type" value="Genomic_DNA"/>
</dbReference>
<dbReference type="EMBL" id="AY070947">
    <property type="protein sequence ID" value="AAL48569.1"/>
    <property type="molecule type" value="mRNA"/>
</dbReference>
<dbReference type="RefSeq" id="NP_651226.1">
    <property type="nucleotide sequence ID" value="NM_142969.4"/>
</dbReference>
<dbReference type="SMR" id="Q9VCC0"/>
<dbReference type="BioGRID" id="67806">
    <property type="interactions" value="5"/>
</dbReference>
<dbReference type="FunCoup" id="Q9VCC0">
    <property type="interactions" value="2366"/>
</dbReference>
<dbReference type="IntAct" id="Q9VCC0">
    <property type="interactions" value="2"/>
</dbReference>
<dbReference type="STRING" id="7227.FBpp0083939"/>
<dbReference type="GlyGen" id="Q9VCC0">
    <property type="glycosylation" value="1 site"/>
</dbReference>
<dbReference type="iPTMnet" id="Q9VCC0"/>
<dbReference type="PaxDb" id="7227-FBpp0083939"/>
<dbReference type="DNASU" id="42874"/>
<dbReference type="EnsemblMetazoa" id="FBtr0084554">
    <property type="protein sequence ID" value="FBpp0083939"/>
    <property type="gene ID" value="FBgn0029503"/>
</dbReference>
<dbReference type="GeneID" id="42874"/>
<dbReference type="KEGG" id="dme:Dmel_CG6198"/>
<dbReference type="UCSC" id="CG6198-RA">
    <property type="organism name" value="d. melanogaster"/>
</dbReference>
<dbReference type="AGR" id="FB:FBgn0029503"/>
<dbReference type="CTD" id="42874"/>
<dbReference type="FlyBase" id="FBgn0029503">
    <property type="gene designation" value="mora"/>
</dbReference>
<dbReference type="VEuPathDB" id="VectorBase:FBgn0029503"/>
<dbReference type="eggNOG" id="KOG1667">
    <property type="taxonomic scope" value="Eukaryota"/>
</dbReference>
<dbReference type="GeneTree" id="ENSGT00940000159429"/>
<dbReference type="HOGENOM" id="CLU_040079_0_0_1"/>
<dbReference type="InParanoid" id="Q9VCC0"/>
<dbReference type="OMA" id="KHRWVAK"/>
<dbReference type="OrthoDB" id="10261079at2759"/>
<dbReference type="PhylomeDB" id="Q9VCC0"/>
<dbReference type="BioGRID-ORCS" id="42874">
    <property type="hits" value="0 hits in 3 CRISPR screens"/>
</dbReference>
<dbReference type="GenomeRNAi" id="42874"/>
<dbReference type="PRO" id="PR:Q9VCC0"/>
<dbReference type="Proteomes" id="UP000000803">
    <property type="component" value="Chromosome 3R"/>
</dbReference>
<dbReference type="Bgee" id="FBgn0029503">
    <property type="expression patterns" value="Expressed in adult middle midgut class II enteroendocrine cell in adult midgut (Drosophila) and 81 other cell types or tissues"/>
</dbReference>
<dbReference type="GO" id="GO:0005737">
    <property type="term" value="C:cytoplasm"/>
    <property type="evidence" value="ECO:0000314"/>
    <property type="project" value="UniProtKB"/>
</dbReference>
<dbReference type="GO" id="GO:1990498">
    <property type="term" value="C:mitotic spindle microtubule"/>
    <property type="evidence" value="ECO:0000314"/>
    <property type="project" value="UniProtKB"/>
</dbReference>
<dbReference type="GO" id="GO:0005634">
    <property type="term" value="C:nucleus"/>
    <property type="evidence" value="ECO:0000314"/>
    <property type="project" value="UniProtKB"/>
</dbReference>
<dbReference type="GO" id="GO:0048471">
    <property type="term" value="C:perinuclear region of cytoplasm"/>
    <property type="evidence" value="ECO:0000314"/>
    <property type="project" value="UniProtKB"/>
</dbReference>
<dbReference type="GO" id="GO:0008270">
    <property type="term" value="F:zinc ion binding"/>
    <property type="evidence" value="ECO:0000318"/>
    <property type="project" value="GO_Central"/>
</dbReference>
<dbReference type="GO" id="GO:0051298">
    <property type="term" value="P:centrosome duplication"/>
    <property type="evidence" value="ECO:0000315"/>
    <property type="project" value="FlyBase"/>
</dbReference>
<dbReference type="GO" id="GO:0031116">
    <property type="term" value="P:positive regulation of microtubule polymerization"/>
    <property type="evidence" value="ECO:0000315"/>
    <property type="project" value="UniProtKB"/>
</dbReference>
<dbReference type="GO" id="GO:0008361">
    <property type="term" value="P:regulation of cell size"/>
    <property type="evidence" value="ECO:0000315"/>
    <property type="project" value="FlyBase"/>
</dbReference>
<dbReference type="GO" id="GO:0050773">
    <property type="term" value="P:regulation of dendrite development"/>
    <property type="evidence" value="ECO:0000315"/>
    <property type="project" value="FlyBase"/>
</dbReference>
<dbReference type="GO" id="GO:1901673">
    <property type="term" value="P:regulation of mitotic spindle assembly"/>
    <property type="evidence" value="ECO:0000315"/>
    <property type="project" value="UniProtKB"/>
</dbReference>
<dbReference type="CDD" id="cd06488">
    <property type="entry name" value="p23_melusin_like"/>
    <property type="match status" value="1"/>
</dbReference>
<dbReference type="FunFam" id="2.60.40.790:FF:000111">
    <property type="entry name" value="Cysteine and histidine-rich domain-containing protein"/>
    <property type="match status" value="1"/>
</dbReference>
<dbReference type="Gene3D" id="2.60.40.790">
    <property type="match status" value="1"/>
</dbReference>
<dbReference type="Gene3D" id="4.10.1130.20">
    <property type="match status" value="2"/>
</dbReference>
<dbReference type="InterPro" id="IPR007051">
    <property type="entry name" value="CHORD_dom"/>
</dbReference>
<dbReference type="InterPro" id="IPR039790">
    <property type="entry name" value="CHRD1"/>
</dbReference>
<dbReference type="InterPro" id="IPR007052">
    <property type="entry name" value="CS_dom"/>
</dbReference>
<dbReference type="InterPro" id="IPR008978">
    <property type="entry name" value="HSP20-like_chaperone"/>
</dbReference>
<dbReference type="PANTHER" id="PTHR46983:SF3">
    <property type="entry name" value="CHPADIPLOID STATE MAINTENANCE PROTEIN CHPA"/>
    <property type="match status" value="1"/>
</dbReference>
<dbReference type="PANTHER" id="PTHR46983">
    <property type="entry name" value="CYSTEINE AND HISTIDINE-RICH DOMAIN-CONTAINING PROTEIN 1"/>
    <property type="match status" value="1"/>
</dbReference>
<dbReference type="Pfam" id="PF04968">
    <property type="entry name" value="CHORD"/>
    <property type="match status" value="2"/>
</dbReference>
<dbReference type="Pfam" id="PF04969">
    <property type="entry name" value="CS"/>
    <property type="match status" value="1"/>
</dbReference>
<dbReference type="SUPFAM" id="SSF49764">
    <property type="entry name" value="HSP20-like chaperones"/>
    <property type="match status" value="1"/>
</dbReference>
<dbReference type="PROSITE" id="PS51401">
    <property type="entry name" value="CHORD"/>
    <property type="match status" value="2"/>
</dbReference>
<dbReference type="PROSITE" id="PS51203">
    <property type="entry name" value="CS"/>
    <property type="match status" value="1"/>
</dbReference>
<feature type="chain" id="PRO_0000402803" description="Cysteine and histidine-rich domain-containing protein morgana">
    <location>
        <begin position="1"/>
        <end position="354"/>
    </location>
</feature>
<feature type="domain" description="CHORD 1" evidence="2">
    <location>
        <begin position="4"/>
        <end position="63"/>
    </location>
</feature>
<feature type="domain" description="CHORD 2" evidence="2">
    <location>
        <begin position="140"/>
        <end position="199"/>
    </location>
</feature>
<feature type="domain" description="CS" evidence="1">
    <location>
        <begin position="210"/>
        <end position="301"/>
    </location>
</feature>
<feature type="binding site" evidence="2">
    <location>
        <position position="4"/>
    </location>
    <ligand>
        <name>Zn(2+)</name>
        <dbReference type="ChEBI" id="CHEBI:29105"/>
        <label>1</label>
    </ligand>
</feature>
<feature type="binding site" evidence="2">
    <location>
        <position position="9"/>
    </location>
    <ligand>
        <name>Zn(2+)</name>
        <dbReference type="ChEBI" id="CHEBI:29105"/>
        <label>1</label>
    </ligand>
</feature>
<feature type="binding site" evidence="2">
    <location>
        <position position="23"/>
    </location>
    <ligand>
        <name>Zn(2+)</name>
        <dbReference type="ChEBI" id="CHEBI:29105"/>
        <label>1</label>
    </ligand>
</feature>
<feature type="binding site" evidence="2">
    <location>
        <position position="26"/>
    </location>
    <ligand>
        <name>Zn(2+)</name>
        <dbReference type="ChEBI" id="CHEBI:29105"/>
        <label>2</label>
    </ligand>
</feature>
<feature type="binding site" evidence="2">
    <location>
        <position position="41"/>
    </location>
    <ligand>
        <name>Zn(2+)</name>
        <dbReference type="ChEBI" id="CHEBI:29105"/>
        <label>2</label>
    </ligand>
</feature>
<feature type="binding site" evidence="2">
    <location>
        <position position="42"/>
    </location>
    <ligand>
        <name>Zn(2+)</name>
        <dbReference type="ChEBI" id="CHEBI:29105"/>
        <label>2</label>
    </ligand>
</feature>
<feature type="binding site" evidence="2">
    <location>
        <position position="58"/>
    </location>
    <ligand>
        <name>Zn(2+)</name>
        <dbReference type="ChEBI" id="CHEBI:29105"/>
        <label>2</label>
    </ligand>
</feature>
<feature type="binding site" evidence="2">
    <location>
        <position position="63"/>
    </location>
    <ligand>
        <name>Zn(2+)</name>
        <dbReference type="ChEBI" id="CHEBI:29105"/>
        <label>1</label>
    </ligand>
</feature>
<feature type="binding site" evidence="2">
    <location>
        <position position="140"/>
    </location>
    <ligand>
        <name>Zn(2+)</name>
        <dbReference type="ChEBI" id="CHEBI:29105"/>
        <label>3</label>
    </ligand>
</feature>
<feature type="binding site" evidence="2">
    <location>
        <position position="145"/>
    </location>
    <ligand>
        <name>Zn(2+)</name>
        <dbReference type="ChEBI" id="CHEBI:29105"/>
        <label>3</label>
    </ligand>
</feature>
<feature type="binding site" evidence="2">
    <location>
        <position position="159"/>
    </location>
    <ligand>
        <name>Zn(2+)</name>
        <dbReference type="ChEBI" id="CHEBI:29105"/>
        <label>3</label>
    </ligand>
</feature>
<feature type="binding site" evidence="2">
    <location>
        <position position="162"/>
    </location>
    <ligand>
        <name>Zn(2+)</name>
        <dbReference type="ChEBI" id="CHEBI:29105"/>
        <label>4</label>
    </ligand>
</feature>
<feature type="binding site" evidence="2">
    <location>
        <position position="177"/>
    </location>
    <ligand>
        <name>Zn(2+)</name>
        <dbReference type="ChEBI" id="CHEBI:29105"/>
        <label>4</label>
    </ligand>
</feature>
<feature type="binding site" evidence="2">
    <location>
        <position position="178"/>
    </location>
    <ligand>
        <name>Zn(2+)</name>
        <dbReference type="ChEBI" id="CHEBI:29105"/>
        <label>4</label>
    </ligand>
</feature>
<feature type="binding site" evidence="2">
    <location>
        <position position="194"/>
    </location>
    <ligand>
        <name>Zn(2+)</name>
        <dbReference type="ChEBI" id="CHEBI:29105"/>
        <label>4</label>
    </ligand>
</feature>
<feature type="binding site" evidence="2">
    <location>
        <position position="199"/>
    </location>
    <ligand>
        <name>Zn(2+)</name>
        <dbReference type="ChEBI" id="CHEBI:29105"/>
        <label>3</label>
    </ligand>
</feature>
<feature type="modified residue" description="Phosphoserine" evidence="3 4">
    <location>
        <position position="324"/>
    </location>
</feature>
<feature type="modified residue" description="Phosphoserine" evidence="4">
    <location>
        <position position="339"/>
    </location>
</feature>
<feature type="mutagenesis site" description="Early larval lethal. Homozygous neurons (generated by mosaic analysis) display decreased elongation/retraction rate of terminal branches, resulting in small dendritic arbors regardless of pupal body size and/or nutritional input. Also in both fed and starved pupae, dendritic segment length is decreased without simplifying the branching pattern." evidence="6">
    <location>
        <begin position="172"/>
        <end position="354"/>
    </location>
</feature>
<feature type="sequence conflict" description="In Ref. 1; AAF18436." evidence="10" ref="1">
    <original>K</original>
    <variation>T</variation>
    <location>
        <position position="288"/>
    </location>
</feature>
<comment type="function">
    <text evidence="5 6 7">Regulates centrosome duplication and mitotic spindle dynamics (PubMed:20230755, PubMed:31907206). Also involved in controlling the size of dendritic arbors (PubMed:24643112). May act as co-chaperone for Hsp83 (PubMed:31907206). During mitotic spindle assembly, regulates microtubule (MT) dynamics by binding to MTs and promoting MT polymerisation (PubMed:31907206). Promotes the elongation and retraction of terminal branches in response to changes in body size, possibly acting downstream of the TORC2 pathway to enable proportional scaling of dendritic arbors (PubMed:24643112).</text>
</comment>
<comment type="subunit">
    <text evidence="7">Interacts with Hsp83.</text>
</comment>
<comment type="subcellular location">
    <subcellularLocation>
        <location evidence="7">Cytoplasm</location>
    </subcellularLocation>
    <subcellularLocation>
        <location evidence="7">Nucleus</location>
    </subcellularLocation>
    <subcellularLocation>
        <location evidence="7">Cytoplasm</location>
        <location evidence="7">Cytoskeleton</location>
        <location evidence="7">Spindle</location>
    </subcellularLocation>
    <text evidence="7">In syncytial embryos, mostly cytoplasmic during interphase, with enrichment in the perinuclear area and a weak nuclear localization. Upon nuclear envelope breakdown, localizes to the spindles and remains associated with the spindle microtubules throughout mitosis.</text>
</comment>
<comment type="developmental stage">
    <text evidence="6 7">Expressed in embryos (PubMed:31907206). Expressed in larvae (PubMed:24643112).</text>
</comment>
<comment type="disruption phenotype">
    <text evidence="5 7">Results in centrosome amplification and lethality (PubMed:20230755). Cells become polyploid or undergo apoptosis (PubMed:20230755). Homozygotes died as third instar larvae (PubMed:20230755). RNAi-mediated knockdown in neuronal cells, results in severe mitotic defects in the larval brain and is lethal at the third-instar stage (PubMed:31907206). RNAi-mediated knockdown in the female germline, results in embryos failing to hatch due to various mitotic defects such as abnormal chromosome condensation and adherent spindle formation (PubMed:31907206). However, in contrast to RNAi-mediated knockdown in the brain, embryos do not exhibit centrosome amplification (PubMed:31907206).</text>
</comment>
<evidence type="ECO:0000255" key="1">
    <source>
        <dbReference type="PROSITE-ProRule" id="PRU00547"/>
    </source>
</evidence>
<evidence type="ECO:0000255" key="2">
    <source>
        <dbReference type="PROSITE-ProRule" id="PRU00734"/>
    </source>
</evidence>
<evidence type="ECO:0000269" key="3">
    <source>
    </source>
</evidence>
<evidence type="ECO:0000269" key="4">
    <source>
    </source>
</evidence>
<evidence type="ECO:0000269" key="5">
    <source>
    </source>
</evidence>
<evidence type="ECO:0000269" key="6">
    <source>
    </source>
</evidence>
<evidence type="ECO:0000269" key="7">
    <source>
    </source>
</evidence>
<evidence type="ECO:0000303" key="8">
    <source>
    </source>
</evidence>
<evidence type="ECO:0000303" key="9">
    <source>
    </source>
</evidence>
<evidence type="ECO:0000305" key="10"/>
<evidence type="ECO:0000312" key="11">
    <source>
        <dbReference type="FlyBase" id="FBgn0029503"/>
    </source>
</evidence>
<name>CHRD1_DROME</name>
<keyword id="KW-0963">Cytoplasm</keyword>
<keyword id="KW-0206">Cytoskeleton</keyword>
<keyword id="KW-0479">Metal-binding</keyword>
<keyword id="KW-0539">Nucleus</keyword>
<keyword id="KW-0597">Phosphoprotein</keyword>
<keyword id="KW-1185">Reference proteome</keyword>
<keyword id="KW-0677">Repeat</keyword>
<keyword id="KW-0862">Zinc</keyword>
<proteinExistence type="evidence at protein level"/>
<reference key="1">
    <citation type="journal article" date="1999" name="Cell">
        <title>A novel class of eukaryotic zinc-binding proteins is required for disease resistance signaling in barley and development in C. elegans.</title>
        <authorList>
            <person name="Shirasu K."/>
            <person name="Lahaye T."/>
            <person name="Tan M.-W."/>
            <person name="Zhou F."/>
            <person name="Azevedo C."/>
            <person name="Schulze-Lefert P."/>
        </authorList>
    </citation>
    <scope>NUCLEOTIDE SEQUENCE [MRNA]</scope>
</reference>
<reference key="2">
    <citation type="journal article" date="2000" name="Science">
        <title>The genome sequence of Drosophila melanogaster.</title>
        <authorList>
            <person name="Adams M.D."/>
            <person name="Celniker S.E."/>
            <person name="Holt R.A."/>
            <person name="Evans C.A."/>
            <person name="Gocayne J.D."/>
            <person name="Amanatides P.G."/>
            <person name="Scherer S.E."/>
            <person name="Li P.W."/>
            <person name="Hoskins R.A."/>
            <person name="Galle R.F."/>
            <person name="George R.A."/>
            <person name="Lewis S.E."/>
            <person name="Richards S."/>
            <person name="Ashburner M."/>
            <person name="Henderson S.N."/>
            <person name="Sutton G.G."/>
            <person name="Wortman J.R."/>
            <person name="Yandell M.D."/>
            <person name="Zhang Q."/>
            <person name="Chen L.X."/>
            <person name="Brandon R.C."/>
            <person name="Rogers Y.-H.C."/>
            <person name="Blazej R.G."/>
            <person name="Champe M."/>
            <person name="Pfeiffer B.D."/>
            <person name="Wan K.H."/>
            <person name="Doyle C."/>
            <person name="Baxter E.G."/>
            <person name="Helt G."/>
            <person name="Nelson C.R."/>
            <person name="Miklos G.L.G."/>
            <person name="Abril J.F."/>
            <person name="Agbayani A."/>
            <person name="An H.-J."/>
            <person name="Andrews-Pfannkoch C."/>
            <person name="Baldwin D."/>
            <person name="Ballew R.M."/>
            <person name="Basu A."/>
            <person name="Baxendale J."/>
            <person name="Bayraktaroglu L."/>
            <person name="Beasley E.M."/>
            <person name="Beeson K.Y."/>
            <person name="Benos P.V."/>
            <person name="Berman B.P."/>
            <person name="Bhandari D."/>
            <person name="Bolshakov S."/>
            <person name="Borkova D."/>
            <person name="Botchan M.R."/>
            <person name="Bouck J."/>
            <person name="Brokstein P."/>
            <person name="Brottier P."/>
            <person name="Burtis K.C."/>
            <person name="Busam D.A."/>
            <person name="Butler H."/>
            <person name="Cadieu E."/>
            <person name="Center A."/>
            <person name="Chandra I."/>
            <person name="Cherry J.M."/>
            <person name="Cawley S."/>
            <person name="Dahlke C."/>
            <person name="Davenport L.B."/>
            <person name="Davies P."/>
            <person name="de Pablos B."/>
            <person name="Delcher A."/>
            <person name="Deng Z."/>
            <person name="Mays A.D."/>
            <person name="Dew I."/>
            <person name="Dietz S.M."/>
            <person name="Dodson K."/>
            <person name="Doup L.E."/>
            <person name="Downes M."/>
            <person name="Dugan-Rocha S."/>
            <person name="Dunkov B.C."/>
            <person name="Dunn P."/>
            <person name="Durbin K.J."/>
            <person name="Evangelista C.C."/>
            <person name="Ferraz C."/>
            <person name="Ferriera S."/>
            <person name="Fleischmann W."/>
            <person name="Fosler C."/>
            <person name="Gabrielian A.E."/>
            <person name="Garg N.S."/>
            <person name="Gelbart W.M."/>
            <person name="Glasser K."/>
            <person name="Glodek A."/>
            <person name="Gong F."/>
            <person name="Gorrell J.H."/>
            <person name="Gu Z."/>
            <person name="Guan P."/>
            <person name="Harris M."/>
            <person name="Harris N.L."/>
            <person name="Harvey D.A."/>
            <person name="Heiman T.J."/>
            <person name="Hernandez J.R."/>
            <person name="Houck J."/>
            <person name="Hostin D."/>
            <person name="Houston K.A."/>
            <person name="Howland T.J."/>
            <person name="Wei M.-H."/>
            <person name="Ibegwam C."/>
            <person name="Jalali M."/>
            <person name="Kalush F."/>
            <person name="Karpen G.H."/>
            <person name="Ke Z."/>
            <person name="Kennison J.A."/>
            <person name="Ketchum K.A."/>
            <person name="Kimmel B.E."/>
            <person name="Kodira C.D."/>
            <person name="Kraft C.L."/>
            <person name="Kravitz S."/>
            <person name="Kulp D."/>
            <person name="Lai Z."/>
            <person name="Lasko P."/>
            <person name="Lei Y."/>
            <person name="Levitsky A.A."/>
            <person name="Li J.H."/>
            <person name="Li Z."/>
            <person name="Liang Y."/>
            <person name="Lin X."/>
            <person name="Liu X."/>
            <person name="Mattei B."/>
            <person name="McIntosh T.C."/>
            <person name="McLeod M.P."/>
            <person name="McPherson D."/>
            <person name="Merkulov G."/>
            <person name="Milshina N.V."/>
            <person name="Mobarry C."/>
            <person name="Morris J."/>
            <person name="Moshrefi A."/>
            <person name="Mount S.M."/>
            <person name="Moy M."/>
            <person name="Murphy B."/>
            <person name="Murphy L."/>
            <person name="Muzny D.M."/>
            <person name="Nelson D.L."/>
            <person name="Nelson D.R."/>
            <person name="Nelson K.A."/>
            <person name="Nixon K."/>
            <person name="Nusskern D.R."/>
            <person name="Pacleb J.M."/>
            <person name="Palazzolo M."/>
            <person name="Pittman G.S."/>
            <person name="Pan S."/>
            <person name="Pollard J."/>
            <person name="Puri V."/>
            <person name="Reese M.G."/>
            <person name="Reinert K."/>
            <person name="Remington K."/>
            <person name="Saunders R.D.C."/>
            <person name="Scheeler F."/>
            <person name="Shen H."/>
            <person name="Shue B.C."/>
            <person name="Siden-Kiamos I."/>
            <person name="Simpson M."/>
            <person name="Skupski M.P."/>
            <person name="Smith T.J."/>
            <person name="Spier E."/>
            <person name="Spradling A.C."/>
            <person name="Stapleton M."/>
            <person name="Strong R."/>
            <person name="Sun E."/>
            <person name="Svirskas R."/>
            <person name="Tector C."/>
            <person name="Turner R."/>
            <person name="Venter E."/>
            <person name="Wang A.H."/>
            <person name="Wang X."/>
            <person name="Wang Z.-Y."/>
            <person name="Wassarman D.A."/>
            <person name="Weinstock G.M."/>
            <person name="Weissenbach J."/>
            <person name="Williams S.M."/>
            <person name="Woodage T."/>
            <person name="Worley K.C."/>
            <person name="Wu D."/>
            <person name="Yang S."/>
            <person name="Yao Q.A."/>
            <person name="Ye J."/>
            <person name="Yeh R.-F."/>
            <person name="Zaveri J.S."/>
            <person name="Zhan M."/>
            <person name="Zhang G."/>
            <person name="Zhao Q."/>
            <person name="Zheng L."/>
            <person name="Zheng X.H."/>
            <person name="Zhong F.N."/>
            <person name="Zhong W."/>
            <person name="Zhou X."/>
            <person name="Zhu S.C."/>
            <person name="Zhu X."/>
            <person name="Smith H.O."/>
            <person name="Gibbs R.A."/>
            <person name="Myers E.W."/>
            <person name="Rubin G.M."/>
            <person name="Venter J.C."/>
        </authorList>
    </citation>
    <scope>NUCLEOTIDE SEQUENCE [LARGE SCALE GENOMIC DNA]</scope>
    <source>
        <strain>Berkeley</strain>
    </source>
</reference>
<reference key="3">
    <citation type="journal article" date="2002" name="Genome Biol.">
        <title>Annotation of the Drosophila melanogaster euchromatic genome: a systematic review.</title>
        <authorList>
            <person name="Misra S."/>
            <person name="Crosby M.A."/>
            <person name="Mungall C.J."/>
            <person name="Matthews B.B."/>
            <person name="Campbell K.S."/>
            <person name="Hradecky P."/>
            <person name="Huang Y."/>
            <person name="Kaminker J.S."/>
            <person name="Millburn G.H."/>
            <person name="Prochnik S.E."/>
            <person name="Smith C.D."/>
            <person name="Tupy J.L."/>
            <person name="Whitfield E.J."/>
            <person name="Bayraktaroglu L."/>
            <person name="Berman B.P."/>
            <person name="Bettencourt B.R."/>
            <person name="Celniker S.E."/>
            <person name="de Grey A.D.N.J."/>
            <person name="Drysdale R.A."/>
            <person name="Harris N.L."/>
            <person name="Richter J."/>
            <person name="Russo S."/>
            <person name="Schroeder A.J."/>
            <person name="Shu S.Q."/>
            <person name="Stapleton M."/>
            <person name="Yamada C."/>
            <person name="Ashburner M."/>
            <person name="Gelbart W.M."/>
            <person name="Rubin G.M."/>
            <person name="Lewis S.E."/>
        </authorList>
    </citation>
    <scope>GENOME REANNOTATION</scope>
    <source>
        <strain>Berkeley</strain>
    </source>
</reference>
<reference key="4">
    <citation type="journal article" date="2002" name="Genome Biol.">
        <title>A Drosophila full-length cDNA resource.</title>
        <authorList>
            <person name="Stapleton M."/>
            <person name="Carlson J.W."/>
            <person name="Brokstein P."/>
            <person name="Yu C."/>
            <person name="Champe M."/>
            <person name="George R.A."/>
            <person name="Guarin H."/>
            <person name="Kronmiller B."/>
            <person name="Pacleb J.M."/>
            <person name="Park S."/>
            <person name="Wan K.H."/>
            <person name="Rubin G.M."/>
            <person name="Celniker S.E."/>
        </authorList>
    </citation>
    <scope>NUCLEOTIDE SEQUENCE [LARGE SCALE MRNA]</scope>
    <source>
        <strain>Berkeley</strain>
        <tissue>Embryo</tissue>
    </source>
</reference>
<reference key="5">
    <citation type="journal article" date="2010" name="Dev. Cell">
        <title>Morgana/chp-1, a ROCK inhibitor involved in centrosome duplication and tumorigenesis.</title>
        <authorList>
            <person name="Ferretti R."/>
            <person name="Palumbo V."/>
            <person name="Di Savino A."/>
            <person name="Velasco S."/>
            <person name="Sbroggio M."/>
            <person name="Sportoletti P."/>
            <person name="Micale L."/>
            <person name="Turco E."/>
            <person name="Silengo L."/>
            <person name="Palumbo G."/>
            <person name="Hirsch E."/>
            <person name="Teruya-Feldstein J."/>
            <person name="Bonaccorsi S."/>
            <person name="Pandolfi P.P."/>
            <person name="Gatti M."/>
            <person name="Tarone G."/>
            <person name="Brancaccio M."/>
        </authorList>
    </citation>
    <scope>FUNCTION</scope>
    <scope>DISRUPTION PHENOTYPE</scope>
</reference>
<reference key="6">
    <citation type="journal article" date="2007" name="Mol. Biosyst.">
        <title>An integrated chemical, mass spectrometric and computational strategy for (quantitative) phosphoproteomics: application to Drosophila melanogaster Kc167 cells.</title>
        <authorList>
            <person name="Bodenmiller B."/>
            <person name="Mueller L.N."/>
            <person name="Pedrioli P.G.A."/>
            <person name="Pflieger D."/>
            <person name="Juenger M.A."/>
            <person name="Eng J.K."/>
            <person name="Aebersold R."/>
            <person name="Tao W.A."/>
        </authorList>
    </citation>
    <scope>PHOSPHORYLATION [LARGE SCALE ANALYSIS] AT SER-324</scope>
    <scope>IDENTIFICATION BY MASS SPECTROMETRY</scope>
</reference>
<reference key="7">
    <citation type="journal article" date="2008" name="J. Proteome Res.">
        <title>Phosphoproteome analysis of Drosophila melanogaster embryos.</title>
        <authorList>
            <person name="Zhai B."/>
            <person name="Villen J."/>
            <person name="Beausoleil S.A."/>
            <person name="Mintseris J."/>
            <person name="Gygi S.P."/>
        </authorList>
    </citation>
    <scope>PHOSPHORYLATION [LARGE SCALE ANALYSIS] AT SER-324 AND SER-339</scope>
    <scope>IDENTIFICATION BY MASS SPECTROMETRY</scope>
    <source>
        <tissue>Embryo</tissue>
    </source>
</reference>
<reference key="8">
    <citation type="journal article" date="2014" name="Sci. Rep.">
        <title>An evolutionarily conserved protein CHORD regulates scaling of dendritic arbors with body size.</title>
        <authorList>
            <person name="Shimono K."/>
            <person name="Fujishima K."/>
            <person name="Nomura T."/>
            <person name="Ohashi M."/>
            <person name="Usui T."/>
            <person name="Kengaku M."/>
            <person name="Toyoda A."/>
            <person name="Uemura T."/>
        </authorList>
    </citation>
    <scope>FUNCTION</scope>
    <scope>TISSUE SPECIFICITY</scope>
    <scope>MUTAGENESIS OF 172-MET--ASP-354</scope>
</reference>
<reference key="9">
    <citation type="journal article" date="2020" name="J. Cell Sci.">
        <title>Drosophila Morgana is an Hsp90-interacting protein with a direct role in microtubule polymerisation.</title>
        <authorList>
            <person name="Palumbo V."/>
            <person name="Tariq A."/>
            <person name="Borgal L."/>
            <person name="Metz J."/>
            <person name="Brancaccio M."/>
            <person name="Gatti M."/>
            <person name="Wakefield J.G."/>
            <person name="Bonaccorsi S."/>
        </authorList>
    </citation>
    <scope>FUNCTION</scope>
    <scope>INTERACTION WITH HSP83</scope>
    <scope>SUBCELLULAR LOCATION</scope>
    <scope>TISSUE SPECIFICITY</scope>
    <scope>DISRUPTION PHENOTYPE</scope>
</reference>
<protein>
    <recommendedName>
        <fullName evidence="9">Cysteine and histidine-rich domain-containing protein morgana</fullName>
    </recommendedName>
</protein>
<organism>
    <name type="scientific">Drosophila melanogaster</name>
    <name type="common">Fruit fly</name>
    <dbReference type="NCBI Taxonomy" id="7227"/>
    <lineage>
        <taxon>Eukaryota</taxon>
        <taxon>Metazoa</taxon>
        <taxon>Ecdysozoa</taxon>
        <taxon>Arthropoda</taxon>
        <taxon>Hexapoda</taxon>
        <taxon>Insecta</taxon>
        <taxon>Pterygota</taxon>
        <taxon>Neoptera</taxon>
        <taxon>Endopterygota</taxon>
        <taxon>Diptera</taxon>
        <taxon>Brachycera</taxon>
        <taxon>Muscomorpha</taxon>
        <taxon>Ephydroidea</taxon>
        <taxon>Drosophilidae</taxon>
        <taxon>Drosophila</taxon>
        <taxon>Sophophora</taxon>
    </lineage>
</organism>
<sequence length="354" mass="40240">MEQCYNRGCGQLFDPQTNNDESCRHHPGEPFFHDAYKGWSCCNKKSVDFTEFLNIKGCTLAKHSNVKPPEPEKPVKDESDKDEVIEVRAPIREALPRPPIDSPLTVIQPTVAPALKDMVFAVKTPAAQKSSDAIEVGTTCKNNGCTYSFTGNSSDFGECTYHPGVPIFHEGMKFWSCCQKRTSDFSQFMAQKGCTYGEHKWVKENDDKKVVQCRYDWHQTATNVVMAIYAKKYDYSQSVIELNPIRLHVNLVFPEQDNARFDLDLELRGIVNVSNASAHMYGTKVEIKLPKLEPGSWSNLNFPNKKLPVVKKSQVEEKKKQEESDEEFFDLDDIKAETSFRLSEMSMQSPNNLD</sequence>
<gene>
    <name evidence="9 11" type="primary">mora</name>
    <name evidence="8" type="synonym">CHORD</name>
    <name evidence="11" type="ORF">CG6198</name>
</gene>